<protein>
    <recommendedName>
        <fullName evidence="10">Dehydrogenase/reductase SDR family member 4</fullName>
        <ecNumber evidence="12 13 14">1.1.1.184</ecNumber>
        <ecNumber evidence="12">1.1.1.300</ecNumber>
    </recommendedName>
    <alternativeName>
        <fullName evidence="9">NADPH-dependent carbonyl reductase</fullName>
        <shortName evidence="9">CR</shortName>
        <shortName evidence="9">RACR</shortName>
    </alternativeName>
    <alternativeName>
        <fullName evidence="9">NADPH-dependent retinol dehydrogenase/reductase</fullName>
        <shortName evidence="9">NDRD</shortName>
    </alternativeName>
    <alternativeName>
        <fullName>Peroxisomal short-chain alcohol dehydrogenase</fullName>
        <shortName>PSCD</shortName>
    </alternativeName>
    <alternativeName>
        <fullName evidence="4">Short chain dehydrogenase/reductase family 25C member 2</fullName>
        <shortName evidence="4">Protein SDR25C2</shortName>
    </alternativeName>
    <alternativeName>
        <fullName>rabNRDR</fullName>
    </alternativeName>
</protein>
<feature type="chain" id="PRO_0000054651" description="Dehydrogenase/reductase SDR family member 4">
    <location>
        <begin position="1" status="less than"/>
        <end position="260"/>
    </location>
</feature>
<feature type="short sequence motif" description="Peroxisomal targeting signal" evidence="1">
    <location>
        <begin position="258"/>
        <end position="260"/>
    </location>
</feature>
<feature type="active site" description="Proton acceptor" evidence="5">
    <location>
        <position position="164"/>
    </location>
</feature>
<feature type="binding site" evidence="1">
    <location>
        <begin position="18"/>
        <end position="42"/>
    </location>
    <ligand>
        <name>NADP(+)</name>
        <dbReference type="ChEBI" id="CHEBI:58349"/>
    </ligand>
</feature>
<feature type="binding site" evidence="2">
    <location>
        <position position="151"/>
    </location>
    <ligand>
        <name>substrate</name>
    </ligand>
</feature>
<feature type="binding site" evidence="1">
    <location>
        <position position="168"/>
    </location>
    <ligand>
        <name>NADP(+)</name>
        <dbReference type="ChEBI" id="CHEBI:58349"/>
    </ligand>
</feature>
<feature type="site" description="Responsible for the stereoselective reduction of 3-ketosteroids into 3alpha-hydroxysteroids and benzil into S-benzoin" evidence="1">
    <location>
        <position position="158"/>
    </location>
</feature>
<feature type="site" description="Responsible for the stereoselective reduction of 3-ketosteroids into 3alpha-hydroxysteroids and benzil into S-benzoin" evidence="1">
    <location>
        <position position="161"/>
    </location>
</feature>
<feature type="site" description="Important for the maintenance of the quaternary structure, the catalytic activity and cold stability" evidence="1">
    <location>
        <position position="177"/>
    </location>
</feature>
<feature type="modified residue" description="N6-acetyllysine; alternate" evidence="3">
    <location>
        <position position="74"/>
    </location>
</feature>
<feature type="modified residue" description="N6-succinyllysine; alternate" evidence="3">
    <location>
        <position position="74"/>
    </location>
</feature>
<feature type="modified residue" description="N6-acetyllysine; alternate" evidence="3">
    <location>
        <position position="198"/>
    </location>
</feature>
<feature type="modified residue" description="N6-succinyllysine; alternate" evidence="3">
    <location>
        <position position="198"/>
    </location>
</feature>
<feature type="modified residue" description="Phosphoserine" evidence="3">
    <location>
        <position position="202"/>
    </location>
</feature>
<feature type="modified residue" description="N6-succinyllysine" evidence="3">
    <location>
        <position position="209"/>
    </location>
</feature>
<feature type="non-terminal residue">
    <location>
        <position position="1"/>
    </location>
</feature>
<gene>
    <name type="primary">DHRS4</name>
</gene>
<organism>
    <name type="scientific">Oryctolagus cuniculus</name>
    <name type="common">Rabbit</name>
    <dbReference type="NCBI Taxonomy" id="9986"/>
    <lineage>
        <taxon>Eukaryota</taxon>
        <taxon>Metazoa</taxon>
        <taxon>Chordata</taxon>
        <taxon>Craniata</taxon>
        <taxon>Vertebrata</taxon>
        <taxon>Euteleostomi</taxon>
        <taxon>Mammalia</taxon>
        <taxon>Eutheria</taxon>
        <taxon>Euarchontoglires</taxon>
        <taxon>Glires</taxon>
        <taxon>Lagomorpha</taxon>
        <taxon>Leporidae</taxon>
        <taxon>Oryctolagus</taxon>
    </lineage>
</organism>
<accession>Q9GKX2</accession>
<proteinExistence type="evidence at protein level"/>
<reference key="1">
    <citation type="submission" date="2000-06" db="EMBL/GenBank/DDBJ databases">
        <title>cDNA cloning and characterization of peroxisomal short-chain dehydrogenase / reductase that reduce all-trans retinal to retinol.</title>
        <authorList>
            <person name="Furukawa A."/>
            <person name="Ohnishi T."/>
            <person name="Huang D."/>
            <person name="Araki N."/>
            <person name="Ichikawa Y."/>
        </authorList>
    </citation>
    <scope>NUCLEOTIDE SEQUENCE [MRNA]</scope>
    <scope>FUNCTION</scope>
    <scope>CATALYTIC ACTIVITY</scope>
    <source>
        <tissue>Liver</tissue>
    </source>
</reference>
<reference key="2">
    <citation type="journal article" date="2003" name="Chem. Biol. Interact.">
        <title>Cloning, expression and tissue distribution of a tetrameric form of pig carbonyl reductase.</title>
        <authorList>
            <person name="Usami N."/>
            <person name="Ishikura S."/>
            <person name="Abe H."/>
            <person name="Nagano M."/>
            <person name="Uebuchi M."/>
            <person name="Kuniyasu A."/>
            <person name="Otagiri M."/>
            <person name="Nakayama H."/>
            <person name="Imamura Y."/>
            <person name="Hara A."/>
        </authorList>
    </citation>
    <scope>PROTEIN SEQUENCE OF 75-83; 108-115; 119-125; 133-149 AND 177-190</scope>
    <scope>FUNCTION</scope>
    <scope>TISSUE SPECIFICITY</scope>
    <scope>BIOPHYSICOCHEMICAL PROPERTIES</scope>
    <scope>SUBUNIT</scope>
    <source>
        <tissue>Heart</tissue>
    </source>
</reference>
<reference key="3">
    <citation type="journal article" date="1999" name="J. Biochem.">
        <title>Purification and catalytic properties of a tetrameric carbonyl reductase from rabbit heart.</title>
        <authorList>
            <person name="Imamura Y."/>
            <person name="Migita T."/>
            <person name="Otagiri M."/>
            <person name="Choshi T."/>
            <person name="Hibino S."/>
        </authorList>
    </citation>
    <scope>FUNCTION</scope>
    <scope>CATALYTIC ACTIVITY</scope>
    <scope>BIOPHYSICOCHEMICAL PROPERTIES</scope>
    <scope>DOMAIN</scope>
</reference>
<reference key="4">
    <citation type="journal article" date="2009" name="Arch. Biochem. Biophys.">
        <title>Molecular determinants for the stereospecific reduction of 3-ketosteroids and reactivity towards all-trans-retinal of a short-chain dehydrogenase/reductase (DHRS4).</title>
        <authorList>
            <person name="Endo S."/>
            <person name="Maeda S."/>
            <person name="Matsunaga T."/>
            <person name="Dhagat U."/>
            <person name="El-Kabbani O."/>
            <person name="Tanaka N."/>
            <person name="Nakamura K.T."/>
            <person name="Tajima K."/>
            <person name="Hara A."/>
        </authorList>
    </citation>
    <scope>FUNCTION</scope>
    <scope>CATALYTIC ACTIVITY</scope>
    <scope>BIOPHYSICOCHEMICAL PROPERTIES</scope>
</reference>
<dbReference type="EC" id="1.1.1.184" evidence="12 13 14"/>
<dbReference type="EC" id="1.1.1.300" evidence="12"/>
<dbReference type="EMBL" id="AB045133">
    <property type="protein sequence ID" value="BAB18777.1"/>
    <property type="molecule type" value="mRNA"/>
</dbReference>
<dbReference type="SMR" id="Q9GKX2"/>
<dbReference type="FunCoup" id="Q9GKX2">
    <property type="interactions" value="885"/>
</dbReference>
<dbReference type="STRING" id="9986.ENSOCUP00000019647"/>
<dbReference type="PaxDb" id="9986-ENSOCUP00000019647"/>
<dbReference type="eggNOG" id="KOG0725">
    <property type="taxonomic scope" value="Eukaryota"/>
</dbReference>
<dbReference type="InParanoid" id="Q9GKX2"/>
<dbReference type="BRENDA" id="1.1.1.300">
    <property type="organism ID" value="1749"/>
</dbReference>
<dbReference type="Proteomes" id="UP000001811">
    <property type="component" value="Unplaced"/>
</dbReference>
<dbReference type="GO" id="GO:0005739">
    <property type="term" value="C:mitochondrion"/>
    <property type="evidence" value="ECO:0000250"/>
    <property type="project" value="UniProtKB"/>
</dbReference>
<dbReference type="GO" id="GO:0005777">
    <property type="term" value="C:peroxisome"/>
    <property type="evidence" value="ECO:0007669"/>
    <property type="project" value="UniProtKB-SubCell"/>
</dbReference>
<dbReference type="GO" id="GO:0052650">
    <property type="term" value="F:all-trans-retinol dehydrogenase (NADP+) activity"/>
    <property type="evidence" value="ECO:0000314"/>
    <property type="project" value="UniProtKB"/>
</dbReference>
<dbReference type="GO" id="GO:0004090">
    <property type="term" value="F:carbonyl reductase (NADPH) activity"/>
    <property type="evidence" value="ECO:0000314"/>
    <property type="project" value="UniProtKB"/>
</dbReference>
<dbReference type="GO" id="GO:0042802">
    <property type="term" value="F:identical protein binding"/>
    <property type="evidence" value="ECO:0000250"/>
    <property type="project" value="UniProtKB"/>
</dbReference>
<dbReference type="GO" id="GO:0042180">
    <property type="term" value="P:ketone metabolic process"/>
    <property type="evidence" value="ECO:0000314"/>
    <property type="project" value="UniProtKB"/>
</dbReference>
<dbReference type="GO" id="GO:0042574">
    <property type="term" value="P:retinal metabolic process"/>
    <property type="evidence" value="ECO:0007669"/>
    <property type="project" value="TreeGrafter"/>
</dbReference>
<dbReference type="GO" id="GO:0008202">
    <property type="term" value="P:steroid metabolic process"/>
    <property type="evidence" value="ECO:0000314"/>
    <property type="project" value="UniProtKB"/>
</dbReference>
<dbReference type="CDD" id="cd08936">
    <property type="entry name" value="CR_SDR_c"/>
    <property type="match status" value="1"/>
</dbReference>
<dbReference type="FunFam" id="3.40.50.720:FF:000084">
    <property type="entry name" value="Short-chain dehydrogenase reductase"/>
    <property type="match status" value="1"/>
</dbReference>
<dbReference type="Gene3D" id="3.40.50.720">
    <property type="entry name" value="NAD(P)-binding Rossmann-like Domain"/>
    <property type="match status" value="1"/>
</dbReference>
<dbReference type="InterPro" id="IPR036291">
    <property type="entry name" value="NAD(P)-bd_dom_sf"/>
</dbReference>
<dbReference type="InterPro" id="IPR020904">
    <property type="entry name" value="Sc_DH/Rdtase_CS"/>
</dbReference>
<dbReference type="InterPro" id="IPR002347">
    <property type="entry name" value="SDR_fam"/>
</dbReference>
<dbReference type="NCBIfam" id="NF005559">
    <property type="entry name" value="PRK07231.1"/>
    <property type="match status" value="1"/>
</dbReference>
<dbReference type="PANTHER" id="PTHR43943">
    <property type="entry name" value="DEHYDROGENASE/REDUCTASE (SDR FAMILY) MEMBER 4"/>
    <property type="match status" value="1"/>
</dbReference>
<dbReference type="PANTHER" id="PTHR43943:SF8">
    <property type="entry name" value="DEHYDROGENASE_REDUCTASE SDR FAMILY MEMBER 4-RELATED"/>
    <property type="match status" value="1"/>
</dbReference>
<dbReference type="Pfam" id="PF13561">
    <property type="entry name" value="adh_short_C2"/>
    <property type="match status" value="1"/>
</dbReference>
<dbReference type="PRINTS" id="PR00081">
    <property type="entry name" value="GDHRDH"/>
</dbReference>
<dbReference type="PRINTS" id="PR00080">
    <property type="entry name" value="SDRFAMILY"/>
</dbReference>
<dbReference type="SUPFAM" id="SSF51735">
    <property type="entry name" value="NAD(P)-binding Rossmann-fold domains"/>
    <property type="match status" value="1"/>
</dbReference>
<dbReference type="PROSITE" id="PS00061">
    <property type="entry name" value="ADH_SHORT"/>
    <property type="match status" value="1"/>
</dbReference>
<keyword id="KW-0007">Acetylation</keyword>
<keyword id="KW-0903">Direct protein sequencing</keyword>
<keyword id="KW-0521">NADP</keyword>
<keyword id="KW-0560">Oxidoreductase</keyword>
<keyword id="KW-0576">Peroxisome</keyword>
<keyword id="KW-0597">Phosphoprotein</keyword>
<keyword id="KW-1185">Reference proteome</keyword>
<evidence type="ECO:0000250" key="1">
    <source>
        <dbReference type="UniProtKB" id="Q8WNV7"/>
    </source>
</evidence>
<evidence type="ECO:0000250" key="2">
    <source>
        <dbReference type="UniProtKB" id="Q99714"/>
    </source>
</evidence>
<evidence type="ECO:0000250" key="3">
    <source>
        <dbReference type="UniProtKB" id="Q99LB2"/>
    </source>
</evidence>
<evidence type="ECO:0000250" key="4">
    <source>
        <dbReference type="UniProtKB" id="Q9BTZ2"/>
    </source>
</evidence>
<evidence type="ECO:0000255" key="5">
    <source>
        <dbReference type="PROSITE-ProRule" id="PRU10001"/>
    </source>
</evidence>
<evidence type="ECO:0000269" key="6">
    <source>
    </source>
</evidence>
<evidence type="ECO:0000269" key="7">
    <source>
    </source>
</evidence>
<evidence type="ECO:0000269" key="8">
    <source>
    </source>
</evidence>
<evidence type="ECO:0000303" key="9">
    <source>
    </source>
</evidence>
<evidence type="ECO:0000303" key="10">
    <source>
    </source>
</evidence>
<evidence type="ECO:0000305" key="11"/>
<evidence type="ECO:0000305" key="12">
    <source>
    </source>
</evidence>
<evidence type="ECO:0000305" key="13">
    <source>
    </source>
</evidence>
<evidence type="ECO:0000305" key="14">
    <source>
    </source>
</evidence>
<name>DHRS4_RABIT</name>
<comment type="function">
    <text evidence="1 6 7 8 12">NADPH-dependent oxidoreductase which catalyzes the reduction of a variety of compounds bearing carbonyl groups including ketosteroids, alpha-dicarbonyl compounds, aldehydes, aromatic ketones and quinones (PubMed:12604222, PubMed:19056333, PubMed:9880795). Reduces all-trans-retinal and 9-cis retinal (Probable). Reduces 3-ketosteroids and benzil into 3alpha-hydroxysteroids and S-benzoin, respectively, in contrast to the stereoselectivity of primates DHRS4s which produce 3beta-hydroxysteroids and R-benzoin (By similarity). In the reverse reaction, catalyze the NADP-dependent oxidation of 3alpha-hydroxysteroids and alcohol, but with much lower efficiency (By similarity). Involved in the metabolism of 3alpha-hydroxysteroids, retinoid, isatin and xenobiotic carbonyl compounds (PubMed:12604222, PubMed:19056333).</text>
</comment>
<comment type="catalytic activity">
    <reaction evidence="12 13 14">
        <text>a secondary alcohol + NADP(+) = a ketone + NADPH + H(+)</text>
        <dbReference type="Rhea" id="RHEA:19257"/>
        <dbReference type="ChEBI" id="CHEBI:15378"/>
        <dbReference type="ChEBI" id="CHEBI:17087"/>
        <dbReference type="ChEBI" id="CHEBI:35681"/>
        <dbReference type="ChEBI" id="CHEBI:57783"/>
        <dbReference type="ChEBI" id="CHEBI:58349"/>
        <dbReference type="EC" id="1.1.1.184"/>
    </reaction>
    <physiologicalReaction direction="right-to-left" evidence="12 13 14">
        <dbReference type="Rhea" id="RHEA:19259"/>
    </physiologicalReaction>
</comment>
<comment type="catalytic activity">
    <reaction evidence="13">
        <text>3alpha-hydroxy-5beta-pregnan-20-one + NADP(+) = 5beta-pregnan-3,20-dione + NADPH + H(+)</text>
        <dbReference type="Rhea" id="RHEA:69016"/>
        <dbReference type="ChEBI" id="CHEBI:1712"/>
        <dbReference type="ChEBI" id="CHEBI:15378"/>
        <dbReference type="ChEBI" id="CHEBI:30154"/>
        <dbReference type="ChEBI" id="CHEBI:57783"/>
        <dbReference type="ChEBI" id="CHEBI:58349"/>
    </reaction>
    <physiologicalReaction direction="left-to-right" evidence="13">
        <dbReference type="Rhea" id="RHEA:69017"/>
    </physiologicalReaction>
</comment>
<comment type="catalytic activity">
    <reaction evidence="1">
        <text>5beta-dihydrotestosterone + NADPH + H(+) = 5beta-androstane-3alpha,17beta-diol + NADP(+)</text>
        <dbReference type="Rhea" id="RHEA:69028"/>
        <dbReference type="ChEBI" id="CHEBI:2150"/>
        <dbReference type="ChEBI" id="CHEBI:15378"/>
        <dbReference type="ChEBI" id="CHEBI:36714"/>
        <dbReference type="ChEBI" id="CHEBI:57783"/>
        <dbReference type="ChEBI" id="CHEBI:58349"/>
    </reaction>
    <physiologicalReaction direction="left-to-right" evidence="1">
        <dbReference type="Rhea" id="RHEA:69029"/>
    </physiologicalReaction>
</comment>
<comment type="catalytic activity">
    <reaction evidence="6">
        <text>all-trans-retinol + NADP(+) = all-trans-retinal + NADPH + H(+)</text>
        <dbReference type="Rhea" id="RHEA:25033"/>
        <dbReference type="ChEBI" id="CHEBI:15378"/>
        <dbReference type="ChEBI" id="CHEBI:17336"/>
        <dbReference type="ChEBI" id="CHEBI:17898"/>
        <dbReference type="ChEBI" id="CHEBI:57783"/>
        <dbReference type="ChEBI" id="CHEBI:58349"/>
        <dbReference type="EC" id="1.1.1.300"/>
    </reaction>
    <physiologicalReaction direction="right-to-left" evidence="12">
        <dbReference type="Rhea" id="RHEA:25035"/>
    </physiologicalReaction>
</comment>
<comment type="catalytic activity">
    <reaction evidence="12">
        <text>isatin + NADPH + H(+) = 3-hydroxyindolin-2-one + NADP(+)</text>
        <dbReference type="Rhea" id="RHEA:68608"/>
        <dbReference type="ChEBI" id="CHEBI:15378"/>
        <dbReference type="ChEBI" id="CHEBI:27539"/>
        <dbReference type="ChEBI" id="CHEBI:28536"/>
        <dbReference type="ChEBI" id="CHEBI:57783"/>
        <dbReference type="ChEBI" id="CHEBI:58349"/>
    </reaction>
    <physiologicalReaction direction="left-to-right" evidence="12">
        <dbReference type="Rhea" id="RHEA:68609"/>
    </physiologicalReaction>
</comment>
<comment type="activity regulation">
    <text evidence="8 12">Inhibited by flavonoids (kaempferol, quercetin, quercitrin, genistein), myristic acid, pyrazole, barbital, phenobarbital and CuSO4.</text>
</comment>
<comment type="biophysicochemical properties">
    <kinetics>
        <KM evidence="6">0.028 mM for 16-Ketoestrone (at pH6)</KM>
        <KM evidence="6">0.045 mM for 16-Ketoestrone (at pH7.4)</KM>
        <KM evidence="6">0.007 mM for all-trans-Retinal (at pH7.4)</KM>
        <KM evidence="6">0.079 mM for 9-cis-retinal (at pH7.4)</KM>
        <KM evidence="6">0.11 mM for Isatin (at pH6)</KM>
        <KM evidence="6">0.061 mM for Isatin (at pH7.4)</KM>
        <KM evidence="6">0.89 mM for Propiophenone (at pH6)</KM>
        <KM evidence="6">0.063 mM for Heptanophenone (at pH6)</KM>
        <KM evidence="6">0.027 mM for Nonanophenone (at pH6)</KM>
        <KM evidence="6">0.095 mM for 4-Hexanoylpyridine (at pH6)</KM>
        <KM evidence="6">0.022 mM for Hexanophenone (at pH6)</KM>
        <KM evidence="6">0.11 mM for Valerophenone (at pH6)</KM>
        <KM evidence="6">0.18 mM for n-Butyrophenone (at pH6)</KM>
        <KM evidence="6">0.52 mM for 3-Benzoylpyridine (at pH6)</KM>
        <KM evidence="6">0.69 mM for 4-Benzoylpyridine (at pH6)</KM>
        <KM evidence="6">1.7 mM for 2,3-Hexanedione (at pH6)</KM>
        <KM evidence="6">0.4 mM for 1-phenyl-1,2-propanedione (at pH6)</KM>
        <KM evidence="6">0.11 mM for Benzil (at pH6)</KM>
        <KM evidence="6">13 mM for Diacetyl (at pH6)</KM>
        <KM evidence="6">1.8 mM for Pyridine-4-aldehyde (at pH6)</KM>
        <KM evidence="6">0.006 mM for 1-Phenylisatin (at pH6)</KM>
        <KM evidence="6">0.001 mM for 9,10-Phenanthrenequinone (at pH6)</KM>
        <KM evidence="6">0.001 mM for 9,10-Phenanthrenequinone (at pH7.4)</KM>
        <KM evidence="6">0.12 mM for Menadione (at pH6)</KM>
        <KM evidence="6">0.27 mM for S-(-)-1-Phenyl-1-butanol (at pH7.4)</KM>
        <KM evidence="6">0.034 mM for all-trans-Retinol (at pH7.4)</KM>
        <KM evidence="8">0.33 mM for 3-Benzoylpyridine (at pH6)</KM>
        <KM evidence="8">0.63 mM for 4-Benzoylpyridine (at pH6)</KM>
        <KM evidence="8">1.55 mM for 4-Acetylpyridine (at pH6)</KM>
        <KM evidence="8">1.8 mM for Pyridine-3-aldehyde (at pH6)</KM>
        <KM evidence="8">0.9 mM for Pyridine-4-aldehyde (at pH6)</KM>
        <KM evidence="8">0.59 mM for 4-Nitroacetophenone (at pH6)</KM>
        <KM evidence="8">0.18 mM for Menadione (at pH6)</KM>
        <KM evidence="7">0.028 mM for 5beta-Pregnane-3,20-dione (at pH7.4)</KM>
        <Vmax evidence="6">48.7 umol/min/mg enzyme with 16-Ketoestrone as substrate (at pH6)</Vmax>
        <Vmax evidence="6">24.2 umol/min/mg enzyme with 16-Ketoestrone as substrate (at pH7.4)</Vmax>
        <Vmax evidence="6">2.54 umol/min/mg enzyme with all-trans-Retinal as substrate (at pH7.4)</Vmax>
        <Vmax evidence="6">6.34 umol/min/mg enzyme with 9-cis-retinal as substrate (at pH7.4)</Vmax>
        <Vmax evidence="6">83.6 umol/min/mg enzyme with Isatin as substrate (at pH6)</Vmax>
        <Vmax evidence="6">34.5 umol/min/mg enzyme with Isatin as substrate (at pH7.4)</Vmax>
        <Vmax evidence="6">1.0 umol/min/mg enzyme with Propiophenone as substrate (at pH6)</Vmax>
        <Vmax evidence="6">6.5 umol/min/mg enzyme with Heptanophenone as substrate (at pH6)</Vmax>
        <Vmax evidence="6">3.5 umol/min/mg enzyme with Nonanophenoneas substrate (at pH6)</Vmax>
        <Vmax evidence="6">55.7 umol/min/mg enzyme with 4-Hexanoylpyridine as substrate (at pH6)</Vmax>
        <Vmax evidence="6">5.8 umol/min/mg enzyme with Hexanophenone as substrate (at pH6)</Vmax>
        <Vmax evidence="6">5.8 umol/min/mg enzyme with Valerophenone as substrate (at pH6)</Vmax>
        <Vmax evidence="6">3.3 umol/min/mg enzyme with n-Butyrophenone as substrate (at pH6)</Vmax>
        <Vmax evidence="6">3.8 umol/min/mg enzyme with 3-benzoylpyridine as substrate (at pH6)</Vmax>
        <Vmax evidence="6">13.3 umol/min/mg enzyme with 4-Benzoylpyridine as substrate (at pH6)</Vmax>
        <Vmax evidence="6">115.0 umol/min/mg enzyme with 2,3-Hexanedione as substrate (at pH6)</Vmax>
        <Vmax evidence="6">115.0 umol/min/mg enzyme with 1-phenyl-1,2-propanedione as substrate (at pH6)</Vmax>
        <Vmax evidence="6">66.8 umol/min/mg enzyme for the reduction of Benzil into S-benzoin (at pH6)</Vmax>
        <Vmax evidence="6">110.0 umol/min/mg enzyme with Diacetyl as substrate (at pH6)</Vmax>
        <Vmax evidence="6">98.9 umol/min/mg enzyme with Pyridine-4-aldehyde as substrate (at pH6)</Vmax>
        <Vmax evidence="6">152.0 umol/min/mg enzyme with 1-Phenylisatin as substrate (at pH6)</Vmax>
        <Vmax evidence="6">121.0 umol/min/mg enzyme with 9,10-Phenanthrenequinone as substrate (at pH6)</Vmax>
        <Vmax evidence="6">78.0 umol/min/mg enzyme with 9,10-Phenanthrenequinone as substrate (at pH7.4)</Vmax>
        <Vmax evidence="6">2.6 umol/min/mg enzyme with Menadione as substrate (at pH6)</Vmax>
        <Vmax evidence="6">1.35 umol/min/mg enzyme with S-(-)-1-Phenyl-1-butanol as substrate (at pH7.4)</Vmax>
        <Vmax evidence="6">0.034 umol/min/mg enzyme with all-trans-Retinol as substrate (at pH7.4)</Vmax>
        <Vmax evidence="8">0.76 umol/min/mg enzyme with 3-Benzoylpyridine as substrate (at pH6)</Vmax>
        <Vmax evidence="8">2.98 umol/min/mg enzyme with 4-Benzoylpyridine as substrate (at pH6)</Vmax>
        <Vmax evidence="8">1.76 umol/min/mg enzyme with 4-Acetylpyridine as substrate (at pH6)</Vmax>
        <Vmax evidence="8">3.64 umol/min/mg enzyme with Pyridine-3-aldehyde as substrate (at pH6)</Vmax>
        <Vmax evidence="8">10.5 umol/min/mg enzyme with Pyridine-4-aldehyde as substrate (at pH6)</Vmax>
        <Vmax evidence="8">1.73 umol/min/mg enzyme with 4-Nitroacetophenone as substrate (at pH6)</Vmax>
        <Vmax evidence="8">2.47 umol/min/mg enzyme with Menadione as substrate (at pH6)</Vmax>
        <text evidence="7">kcat is 2 min(-1) with 5beta-Pregnane-3,20-dione as substrate (at pH7.4).</text>
    </kinetics>
</comment>
<comment type="subunit">
    <text evidence="6">Homotetramer.</text>
</comment>
<comment type="subcellular location">
    <subcellularLocation>
        <location evidence="1">Peroxisome</location>
    </subcellularLocation>
</comment>
<comment type="tissue specificity">
    <text evidence="6">Detected in liver and kidney. Detected at lower levels in heart, lung, spleen, small intestine, testis, brain and stomach.</text>
</comment>
<comment type="domain">
    <text evidence="1">The C-terminus peroxisomal targeting signal tripeptide is important for peroxisomal import. Once in the peroxisome, it is involved in intersubunit interactions.</text>
</comment>
<comment type="domain">
    <text evidence="7">Three specific residues, Phe-158, Leu-161 and Asn-177 are conserved between non-primate mammals whereas the respective residues are serine, phenylalanine and threonine in primates (PubMed:19056333). The two residues at positions 158 and 161 are molecular determinants responsible for the stereoselective reduction of 3-ketosteroids and benzil (PubMed:19056333). The presence of an asparagine at position 177 is important for the maintenance of the quaternary structure resulting in stability at cold temperature and improved catalytic activity toward retinal (PubMed:19056333).</text>
</comment>
<comment type="miscellaneous">
    <text evidence="7">Primate DHRS4s display different stereoselectivity and catalytic efficiency in the oxidoreduction of some substrates as compared to other mammal DHRS4s due to a difference in conserved amino acid residues.</text>
</comment>
<comment type="similarity">
    <text evidence="11">Belongs to the short-chain dehydrogenases/reductases (SDR) family.</text>
</comment>
<sequence>MASSGVTRRDPLANKVAIVTASTDGIGLAIARRLAQDGAHVVISSRKQQNVDRAVAALQAEGLSVTGTVCHVGKAEDRERLVATALNLHGGIDILVSNAAVNPFFGKLMDVTEEVWDKILDINVKAMALMTKAVVPEMEKRGGGSVVIVASIAAFNPFSGLGPYNVSKTALVGLTKNLALELAAQNIRVNCLAPGLIKTSFSKALWEDKAQEENIIQKLRIRRLGKPEECAGIVSFLCSEDASYITGETVVVAGGAPSRL</sequence>